<feature type="chain" id="PRO_1000086910" description="ATP synthase subunit beta">
    <location>
        <begin position="1"/>
        <end position="460"/>
    </location>
</feature>
<feature type="binding site" evidence="1">
    <location>
        <begin position="150"/>
        <end position="157"/>
    </location>
    <ligand>
        <name>ATP</name>
        <dbReference type="ChEBI" id="CHEBI:30616"/>
    </ligand>
</feature>
<accession>B1IX06</accession>
<comment type="function">
    <text evidence="1">Produces ATP from ADP in the presence of a proton gradient across the membrane. The catalytic sites are hosted primarily by the beta subunits.</text>
</comment>
<comment type="catalytic activity">
    <reaction evidence="1">
        <text>ATP + H2O + 4 H(+)(in) = ADP + phosphate + 5 H(+)(out)</text>
        <dbReference type="Rhea" id="RHEA:57720"/>
        <dbReference type="ChEBI" id="CHEBI:15377"/>
        <dbReference type="ChEBI" id="CHEBI:15378"/>
        <dbReference type="ChEBI" id="CHEBI:30616"/>
        <dbReference type="ChEBI" id="CHEBI:43474"/>
        <dbReference type="ChEBI" id="CHEBI:456216"/>
        <dbReference type="EC" id="7.1.2.2"/>
    </reaction>
</comment>
<comment type="subunit">
    <text evidence="1">F-type ATPases have 2 components, CF(1) - the catalytic core - and CF(0) - the membrane proton channel. CF(1) has five subunits: alpha(3), beta(3), gamma(1), delta(1), epsilon(1). CF(0) has three main subunits: a(1), b(2) and c(9-12). The alpha and beta chains form an alternating ring which encloses part of the gamma chain. CF(1) is attached to CF(0) by a central stalk formed by the gamma and epsilon chains, while a peripheral stalk is formed by the delta and b chains.</text>
</comment>
<comment type="subcellular location">
    <subcellularLocation>
        <location evidence="1">Cell inner membrane</location>
        <topology evidence="1">Peripheral membrane protein</topology>
    </subcellularLocation>
</comment>
<comment type="similarity">
    <text evidence="1">Belongs to the ATPase alpha/beta chains family.</text>
</comment>
<proteinExistence type="inferred from homology"/>
<name>ATPB_ECOLC</name>
<dbReference type="EC" id="7.1.2.2" evidence="1"/>
<dbReference type="EMBL" id="CP000946">
    <property type="protein sequence ID" value="ACA79858.1"/>
    <property type="molecule type" value="Genomic_DNA"/>
</dbReference>
<dbReference type="RefSeq" id="WP_000190506.1">
    <property type="nucleotide sequence ID" value="NZ_MTFT01000013.1"/>
</dbReference>
<dbReference type="SMR" id="B1IX06"/>
<dbReference type="GeneID" id="93778235"/>
<dbReference type="KEGG" id="ecl:EcolC_4262"/>
<dbReference type="HOGENOM" id="CLU_022398_0_2_6"/>
<dbReference type="GO" id="GO:0005886">
    <property type="term" value="C:plasma membrane"/>
    <property type="evidence" value="ECO:0007669"/>
    <property type="project" value="UniProtKB-SubCell"/>
</dbReference>
<dbReference type="GO" id="GO:0045259">
    <property type="term" value="C:proton-transporting ATP synthase complex"/>
    <property type="evidence" value="ECO:0007669"/>
    <property type="project" value="UniProtKB-KW"/>
</dbReference>
<dbReference type="GO" id="GO:0005524">
    <property type="term" value="F:ATP binding"/>
    <property type="evidence" value="ECO:0007669"/>
    <property type="project" value="UniProtKB-UniRule"/>
</dbReference>
<dbReference type="GO" id="GO:0016887">
    <property type="term" value="F:ATP hydrolysis activity"/>
    <property type="evidence" value="ECO:0007669"/>
    <property type="project" value="InterPro"/>
</dbReference>
<dbReference type="GO" id="GO:0046933">
    <property type="term" value="F:proton-transporting ATP synthase activity, rotational mechanism"/>
    <property type="evidence" value="ECO:0007669"/>
    <property type="project" value="UniProtKB-UniRule"/>
</dbReference>
<dbReference type="CDD" id="cd18110">
    <property type="entry name" value="ATP-synt_F1_beta_C"/>
    <property type="match status" value="1"/>
</dbReference>
<dbReference type="CDD" id="cd18115">
    <property type="entry name" value="ATP-synt_F1_beta_N"/>
    <property type="match status" value="1"/>
</dbReference>
<dbReference type="CDD" id="cd01133">
    <property type="entry name" value="F1-ATPase_beta_CD"/>
    <property type="match status" value="1"/>
</dbReference>
<dbReference type="FunFam" id="1.10.1140.10:FF:000001">
    <property type="entry name" value="ATP synthase subunit beta"/>
    <property type="match status" value="1"/>
</dbReference>
<dbReference type="FunFam" id="2.40.10.170:FF:000003">
    <property type="entry name" value="ATP synthase subunit beta"/>
    <property type="match status" value="1"/>
</dbReference>
<dbReference type="FunFam" id="3.40.50.300:FF:000004">
    <property type="entry name" value="ATP synthase subunit beta"/>
    <property type="match status" value="1"/>
</dbReference>
<dbReference type="Gene3D" id="2.40.10.170">
    <property type="match status" value="1"/>
</dbReference>
<dbReference type="Gene3D" id="1.10.1140.10">
    <property type="entry name" value="Bovine Mitochondrial F1-atpase, Atp Synthase Beta Chain, Chain D, domain 3"/>
    <property type="match status" value="1"/>
</dbReference>
<dbReference type="Gene3D" id="3.40.50.300">
    <property type="entry name" value="P-loop containing nucleotide triphosphate hydrolases"/>
    <property type="match status" value="1"/>
</dbReference>
<dbReference type="HAMAP" id="MF_01347">
    <property type="entry name" value="ATP_synth_beta_bact"/>
    <property type="match status" value="1"/>
</dbReference>
<dbReference type="InterPro" id="IPR003593">
    <property type="entry name" value="AAA+_ATPase"/>
</dbReference>
<dbReference type="InterPro" id="IPR055190">
    <property type="entry name" value="ATP-synt_VA_C"/>
</dbReference>
<dbReference type="InterPro" id="IPR005722">
    <property type="entry name" value="ATP_synth_F1_bsu"/>
</dbReference>
<dbReference type="InterPro" id="IPR020003">
    <property type="entry name" value="ATPase_a/bsu_AS"/>
</dbReference>
<dbReference type="InterPro" id="IPR050053">
    <property type="entry name" value="ATPase_alpha/beta_chains"/>
</dbReference>
<dbReference type="InterPro" id="IPR004100">
    <property type="entry name" value="ATPase_F1/V1/A1_a/bsu_N"/>
</dbReference>
<dbReference type="InterPro" id="IPR036121">
    <property type="entry name" value="ATPase_F1/V1/A1_a/bsu_N_sf"/>
</dbReference>
<dbReference type="InterPro" id="IPR000194">
    <property type="entry name" value="ATPase_F1/V1/A1_a/bsu_nucl-bd"/>
</dbReference>
<dbReference type="InterPro" id="IPR024034">
    <property type="entry name" value="ATPase_F1/V1_b/a_C"/>
</dbReference>
<dbReference type="InterPro" id="IPR027417">
    <property type="entry name" value="P-loop_NTPase"/>
</dbReference>
<dbReference type="NCBIfam" id="TIGR01039">
    <property type="entry name" value="atpD"/>
    <property type="match status" value="1"/>
</dbReference>
<dbReference type="PANTHER" id="PTHR15184">
    <property type="entry name" value="ATP SYNTHASE"/>
    <property type="match status" value="1"/>
</dbReference>
<dbReference type="PANTHER" id="PTHR15184:SF71">
    <property type="entry name" value="ATP SYNTHASE SUBUNIT BETA, MITOCHONDRIAL"/>
    <property type="match status" value="1"/>
</dbReference>
<dbReference type="Pfam" id="PF00006">
    <property type="entry name" value="ATP-synt_ab"/>
    <property type="match status" value="1"/>
</dbReference>
<dbReference type="Pfam" id="PF02874">
    <property type="entry name" value="ATP-synt_ab_N"/>
    <property type="match status" value="1"/>
</dbReference>
<dbReference type="Pfam" id="PF22919">
    <property type="entry name" value="ATP-synt_VA_C"/>
    <property type="match status" value="1"/>
</dbReference>
<dbReference type="SMART" id="SM00382">
    <property type="entry name" value="AAA"/>
    <property type="match status" value="1"/>
</dbReference>
<dbReference type="SUPFAM" id="SSF47917">
    <property type="entry name" value="C-terminal domain of alpha and beta subunits of F1 ATP synthase"/>
    <property type="match status" value="1"/>
</dbReference>
<dbReference type="SUPFAM" id="SSF50615">
    <property type="entry name" value="N-terminal domain of alpha and beta subunits of F1 ATP synthase"/>
    <property type="match status" value="1"/>
</dbReference>
<dbReference type="SUPFAM" id="SSF52540">
    <property type="entry name" value="P-loop containing nucleoside triphosphate hydrolases"/>
    <property type="match status" value="1"/>
</dbReference>
<dbReference type="PROSITE" id="PS00152">
    <property type="entry name" value="ATPASE_ALPHA_BETA"/>
    <property type="match status" value="1"/>
</dbReference>
<keyword id="KW-0066">ATP synthesis</keyword>
<keyword id="KW-0067">ATP-binding</keyword>
<keyword id="KW-0997">Cell inner membrane</keyword>
<keyword id="KW-1003">Cell membrane</keyword>
<keyword id="KW-0139">CF(1)</keyword>
<keyword id="KW-0375">Hydrogen ion transport</keyword>
<keyword id="KW-0406">Ion transport</keyword>
<keyword id="KW-0472">Membrane</keyword>
<keyword id="KW-0547">Nucleotide-binding</keyword>
<keyword id="KW-1278">Translocase</keyword>
<keyword id="KW-0813">Transport</keyword>
<reference key="1">
    <citation type="submission" date="2008-02" db="EMBL/GenBank/DDBJ databases">
        <title>Complete sequence of Escherichia coli C str. ATCC 8739.</title>
        <authorList>
            <person name="Copeland A."/>
            <person name="Lucas S."/>
            <person name="Lapidus A."/>
            <person name="Glavina del Rio T."/>
            <person name="Dalin E."/>
            <person name="Tice H."/>
            <person name="Bruce D."/>
            <person name="Goodwin L."/>
            <person name="Pitluck S."/>
            <person name="Kiss H."/>
            <person name="Brettin T."/>
            <person name="Detter J.C."/>
            <person name="Han C."/>
            <person name="Kuske C.R."/>
            <person name="Schmutz J."/>
            <person name="Larimer F."/>
            <person name="Land M."/>
            <person name="Hauser L."/>
            <person name="Kyrpides N."/>
            <person name="Mikhailova N."/>
            <person name="Ingram L."/>
            <person name="Richardson P."/>
        </authorList>
    </citation>
    <scope>NUCLEOTIDE SEQUENCE [LARGE SCALE GENOMIC DNA]</scope>
    <source>
        <strain>ATCC 8739 / DSM 1576 / NBRC 3972 / NCIMB 8545 / WDCM 00012 / Crooks</strain>
    </source>
</reference>
<organism>
    <name type="scientific">Escherichia coli (strain ATCC 8739 / DSM 1576 / NBRC 3972 / NCIMB 8545 / WDCM 00012 / Crooks)</name>
    <dbReference type="NCBI Taxonomy" id="481805"/>
    <lineage>
        <taxon>Bacteria</taxon>
        <taxon>Pseudomonadati</taxon>
        <taxon>Pseudomonadota</taxon>
        <taxon>Gammaproteobacteria</taxon>
        <taxon>Enterobacterales</taxon>
        <taxon>Enterobacteriaceae</taxon>
        <taxon>Escherichia</taxon>
    </lineage>
</organism>
<protein>
    <recommendedName>
        <fullName evidence="1">ATP synthase subunit beta</fullName>
        <ecNumber evidence="1">7.1.2.2</ecNumber>
    </recommendedName>
    <alternativeName>
        <fullName evidence="1">ATP synthase F1 sector subunit beta</fullName>
    </alternativeName>
    <alternativeName>
        <fullName evidence="1">F-ATPase subunit beta</fullName>
    </alternativeName>
</protein>
<sequence>MATGKIVQVIGAVVDVEFPQDAVPRVYDALEVQNGNERLVLEVQQQLGGGIVRTIAMGSSDGLRRGLDVKDLEHPIEVPVGKATLGRIMNVLGEPVDMKGEIGEEERWAIHRAAPSYEELSNSQELLETGIKVIDLMCPFAKGGKVGLFGGAGVGKTVNMMELIRNIAIEHSGYSVFAGVGERTREGNDFYHEMTDSNVIDKVSLVYGQMNEPPGNRLRVALTGLTMAEKFRDEGRDVLLFVDNIYRYTLAGTEVSALLGRMPSAVGYQPTLAEEMGVLQERITSTKTGSITSVQAVYVPADDLTDPSPATTFAHLDATVVLSRQIASLGIYPAVDPLDSTSRQLDPLVVGQEHYDTARGVQSILQRYQELKDIIAILGMDELSEEDKLVVARARKIQRFLSQPFFVAEVFTGSPGKYVSLKDTIRGFKGIMEGEYDHLPEQAFYMVGSIEEAVEKAKKL</sequence>
<evidence type="ECO:0000255" key="1">
    <source>
        <dbReference type="HAMAP-Rule" id="MF_01347"/>
    </source>
</evidence>
<gene>
    <name evidence="1" type="primary">atpD</name>
    <name type="ordered locus">EcolC_4262</name>
</gene>